<protein>
    <recommendedName>
        <fullName evidence="1">Glutamyl-tRNA(Gln) amidotransferase subunit A</fullName>
        <shortName evidence="1">Glu-ADT subunit A</shortName>
        <ecNumber evidence="1">6.3.5.7</ecNumber>
    </recommendedName>
</protein>
<feature type="chain" id="PRO_1000122474" description="Glutamyl-tRNA(Gln) amidotransferase subunit A">
    <location>
        <begin position="1"/>
        <end position="485"/>
    </location>
</feature>
<feature type="active site" description="Charge relay system" evidence="1">
    <location>
        <position position="79"/>
    </location>
</feature>
<feature type="active site" description="Charge relay system" evidence="1">
    <location>
        <position position="154"/>
    </location>
</feature>
<feature type="active site" description="Acyl-ester intermediate" evidence="1">
    <location>
        <position position="178"/>
    </location>
</feature>
<accession>C1FLD9</accession>
<keyword id="KW-0067">ATP-binding</keyword>
<keyword id="KW-0436">Ligase</keyword>
<keyword id="KW-0547">Nucleotide-binding</keyword>
<keyword id="KW-0648">Protein biosynthesis</keyword>
<reference key="1">
    <citation type="submission" date="2008-10" db="EMBL/GenBank/DDBJ databases">
        <title>Genome sequence of Clostridium botulinum A2 Kyoto.</title>
        <authorList>
            <person name="Shrivastava S."/>
            <person name="Brinkac L.M."/>
            <person name="Brown J.L."/>
            <person name="Bruce D."/>
            <person name="Detter C.C."/>
            <person name="Johnson E.A."/>
            <person name="Munk C.A."/>
            <person name="Smith L.A."/>
            <person name="Smith T.J."/>
            <person name="Sutton G."/>
            <person name="Brettin T.S."/>
        </authorList>
    </citation>
    <scope>NUCLEOTIDE SEQUENCE [LARGE SCALE GENOMIC DNA]</scope>
    <source>
        <strain>Kyoto / Type A2</strain>
    </source>
</reference>
<comment type="function">
    <text evidence="1">Allows the formation of correctly charged Gln-tRNA(Gln) through the transamidation of misacylated Glu-tRNA(Gln) in organisms which lack glutaminyl-tRNA synthetase. The reaction takes place in the presence of glutamine and ATP through an activated gamma-phospho-Glu-tRNA(Gln).</text>
</comment>
<comment type="catalytic activity">
    <reaction evidence="1">
        <text>L-glutamyl-tRNA(Gln) + L-glutamine + ATP + H2O = L-glutaminyl-tRNA(Gln) + L-glutamate + ADP + phosphate + H(+)</text>
        <dbReference type="Rhea" id="RHEA:17521"/>
        <dbReference type="Rhea" id="RHEA-COMP:9681"/>
        <dbReference type="Rhea" id="RHEA-COMP:9684"/>
        <dbReference type="ChEBI" id="CHEBI:15377"/>
        <dbReference type="ChEBI" id="CHEBI:15378"/>
        <dbReference type="ChEBI" id="CHEBI:29985"/>
        <dbReference type="ChEBI" id="CHEBI:30616"/>
        <dbReference type="ChEBI" id="CHEBI:43474"/>
        <dbReference type="ChEBI" id="CHEBI:58359"/>
        <dbReference type="ChEBI" id="CHEBI:78520"/>
        <dbReference type="ChEBI" id="CHEBI:78521"/>
        <dbReference type="ChEBI" id="CHEBI:456216"/>
        <dbReference type="EC" id="6.3.5.7"/>
    </reaction>
</comment>
<comment type="subunit">
    <text evidence="1">Heterotrimer of A, B and C subunits.</text>
</comment>
<comment type="similarity">
    <text evidence="1">Belongs to the amidase family. GatA subfamily.</text>
</comment>
<name>GATA_CLOBJ</name>
<evidence type="ECO:0000255" key="1">
    <source>
        <dbReference type="HAMAP-Rule" id="MF_00120"/>
    </source>
</evidence>
<gene>
    <name evidence="1" type="primary">gatA</name>
    <name type="ordered locus">CLM_3700</name>
</gene>
<proteinExistence type="inferred from homology"/>
<dbReference type="EC" id="6.3.5.7" evidence="1"/>
<dbReference type="EMBL" id="CP001581">
    <property type="protein sequence ID" value="ACO86261.1"/>
    <property type="molecule type" value="Genomic_DNA"/>
</dbReference>
<dbReference type="RefSeq" id="WP_003357359.1">
    <property type="nucleotide sequence ID" value="NC_012563.1"/>
</dbReference>
<dbReference type="SMR" id="C1FLD9"/>
<dbReference type="KEGG" id="cby:CLM_3700"/>
<dbReference type="eggNOG" id="COG0154">
    <property type="taxonomic scope" value="Bacteria"/>
</dbReference>
<dbReference type="HOGENOM" id="CLU_009600_0_3_9"/>
<dbReference type="Proteomes" id="UP000001374">
    <property type="component" value="Chromosome"/>
</dbReference>
<dbReference type="GO" id="GO:0030956">
    <property type="term" value="C:glutamyl-tRNA(Gln) amidotransferase complex"/>
    <property type="evidence" value="ECO:0007669"/>
    <property type="project" value="InterPro"/>
</dbReference>
<dbReference type="GO" id="GO:0005524">
    <property type="term" value="F:ATP binding"/>
    <property type="evidence" value="ECO:0007669"/>
    <property type="project" value="UniProtKB-KW"/>
</dbReference>
<dbReference type="GO" id="GO:0050567">
    <property type="term" value="F:glutaminyl-tRNA synthase (glutamine-hydrolyzing) activity"/>
    <property type="evidence" value="ECO:0007669"/>
    <property type="project" value="UniProtKB-UniRule"/>
</dbReference>
<dbReference type="GO" id="GO:0006412">
    <property type="term" value="P:translation"/>
    <property type="evidence" value="ECO:0007669"/>
    <property type="project" value="UniProtKB-UniRule"/>
</dbReference>
<dbReference type="Gene3D" id="3.90.1300.10">
    <property type="entry name" value="Amidase signature (AS) domain"/>
    <property type="match status" value="1"/>
</dbReference>
<dbReference type="HAMAP" id="MF_00120">
    <property type="entry name" value="GatA"/>
    <property type="match status" value="1"/>
</dbReference>
<dbReference type="InterPro" id="IPR000120">
    <property type="entry name" value="Amidase"/>
</dbReference>
<dbReference type="InterPro" id="IPR020556">
    <property type="entry name" value="Amidase_CS"/>
</dbReference>
<dbReference type="InterPro" id="IPR023631">
    <property type="entry name" value="Amidase_dom"/>
</dbReference>
<dbReference type="InterPro" id="IPR036928">
    <property type="entry name" value="AS_sf"/>
</dbReference>
<dbReference type="InterPro" id="IPR004412">
    <property type="entry name" value="GatA"/>
</dbReference>
<dbReference type="NCBIfam" id="TIGR00132">
    <property type="entry name" value="gatA"/>
    <property type="match status" value="1"/>
</dbReference>
<dbReference type="PANTHER" id="PTHR11895:SF151">
    <property type="entry name" value="GLUTAMYL-TRNA(GLN) AMIDOTRANSFERASE SUBUNIT A"/>
    <property type="match status" value="1"/>
</dbReference>
<dbReference type="PANTHER" id="PTHR11895">
    <property type="entry name" value="TRANSAMIDASE"/>
    <property type="match status" value="1"/>
</dbReference>
<dbReference type="Pfam" id="PF01425">
    <property type="entry name" value="Amidase"/>
    <property type="match status" value="1"/>
</dbReference>
<dbReference type="SUPFAM" id="SSF75304">
    <property type="entry name" value="Amidase signature (AS) enzymes"/>
    <property type="match status" value="1"/>
</dbReference>
<dbReference type="PROSITE" id="PS00571">
    <property type="entry name" value="AMIDASES"/>
    <property type="match status" value="1"/>
</dbReference>
<organism>
    <name type="scientific">Clostridium botulinum (strain Kyoto / Type A2)</name>
    <dbReference type="NCBI Taxonomy" id="536232"/>
    <lineage>
        <taxon>Bacteria</taxon>
        <taxon>Bacillati</taxon>
        <taxon>Bacillota</taxon>
        <taxon>Clostridia</taxon>
        <taxon>Eubacteriales</taxon>
        <taxon>Clostridiaceae</taxon>
        <taxon>Clostridium</taxon>
    </lineage>
</organism>
<sequence>MDLTKLTAHELKDILSNKEVKAEEITRAFLDRINLVDNKLGAYLYVSEEEAIKKAKEIDVKIEKNEELKALSGIPVGIKDNINVKGMQNTCASKILQGYTSPYDAHVTEKIKKEEGIILGKLNMDEFAMGSSTENSAFKLAKNPWDLERVPGGSSGGSAVAVAGCEATLSLGTDTGGSVRQPASFCGIVGLKPTYGRISRSGVVAFGSTLDQVGPMGKDVEDCALLTSAIAGLDKKDFTTADKEVPDYKKSLTKDIKGKKIGIPKEFFGEGLDEKVRKSVEEAIKVLEENGAEVKPCSLPLMDYALSAYYIISSAEASSNLARFDGIRYGHRSKNFKDAQDIYLKSRSEGFGDEVKRRIMLGTYVLSAGYYDAYYKKALKVRKLIKDDFQRVFKDFDAIVSPTSPTTAFKVGEKKDDVMSMYLSDIYTVPISVAGVPAISLPCGMIDGLPVGLQIISDYFKEDVLFNLAYNYEQSVDFHKMRADF</sequence>